<comment type="function">
    <text evidence="1">Specifically methylates the N7 position of a guanine in 16S rRNA.</text>
</comment>
<comment type="subcellular location">
    <subcellularLocation>
        <location evidence="1">Cytoplasm</location>
    </subcellularLocation>
</comment>
<comment type="similarity">
    <text evidence="1">Belongs to the methyltransferase superfamily. RNA methyltransferase RsmG family.</text>
</comment>
<evidence type="ECO:0000255" key="1">
    <source>
        <dbReference type="HAMAP-Rule" id="MF_00074"/>
    </source>
</evidence>
<feature type="chain" id="PRO_0000335394" description="Ribosomal RNA small subunit methyltransferase G">
    <location>
        <begin position="1"/>
        <end position="239"/>
    </location>
</feature>
<feature type="binding site" evidence="1">
    <location>
        <position position="79"/>
    </location>
    <ligand>
        <name>S-adenosyl-L-methionine</name>
        <dbReference type="ChEBI" id="CHEBI:59789"/>
    </ligand>
</feature>
<feature type="binding site" evidence="1">
    <location>
        <position position="84"/>
    </location>
    <ligand>
        <name>S-adenosyl-L-methionine</name>
        <dbReference type="ChEBI" id="CHEBI:59789"/>
    </ligand>
</feature>
<feature type="binding site" evidence="1">
    <location>
        <begin position="130"/>
        <end position="131"/>
    </location>
    <ligand>
        <name>S-adenosyl-L-methionine</name>
        <dbReference type="ChEBI" id="CHEBI:59789"/>
    </ligand>
</feature>
<feature type="binding site" evidence="1">
    <location>
        <position position="149"/>
    </location>
    <ligand>
        <name>S-adenosyl-L-methionine</name>
        <dbReference type="ChEBI" id="CHEBI:59789"/>
    </ligand>
</feature>
<accession>A5CY44</accession>
<proteinExistence type="inferred from homology"/>
<dbReference type="EC" id="2.1.1.-" evidence="1"/>
<dbReference type="EMBL" id="AP009389">
    <property type="protein sequence ID" value="BAF61096.1"/>
    <property type="molecule type" value="Genomic_DNA"/>
</dbReference>
<dbReference type="SMR" id="A5CY44"/>
<dbReference type="STRING" id="370438.PTH_2915"/>
<dbReference type="KEGG" id="pth:PTH_2915"/>
<dbReference type="eggNOG" id="COG0357">
    <property type="taxonomic scope" value="Bacteria"/>
</dbReference>
<dbReference type="HOGENOM" id="CLU_065341_0_1_9"/>
<dbReference type="Proteomes" id="UP000006556">
    <property type="component" value="Chromosome"/>
</dbReference>
<dbReference type="GO" id="GO:0005829">
    <property type="term" value="C:cytosol"/>
    <property type="evidence" value="ECO:0007669"/>
    <property type="project" value="TreeGrafter"/>
</dbReference>
<dbReference type="GO" id="GO:0070043">
    <property type="term" value="F:rRNA (guanine-N7-)-methyltransferase activity"/>
    <property type="evidence" value="ECO:0007669"/>
    <property type="project" value="UniProtKB-UniRule"/>
</dbReference>
<dbReference type="FunFam" id="3.40.50.150:FF:000041">
    <property type="entry name" value="Ribosomal RNA small subunit methyltransferase G"/>
    <property type="match status" value="1"/>
</dbReference>
<dbReference type="Gene3D" id="3.40.50.150">
    <property type="entry name" value="Vaccinia Virus protein VP39"/>
    <property type="match status" value="1"/>
</dbReference>
<dbReference type="HAMAP" id="MF_00074">
    <property type="entry name" value="16SrRNA_methyltr_G"/>
    <property type="match status" value="1"/>
</dbReference>
<dbReference type="InterPro" id="IPR003682">
    <property type="entry name" value="rRNA_ssu_MeTfrase_G"/>
</dbReference>
<dbReference type="InterPro" id="IPR029063">
    <property type="entry name" value="SAM-dependent_MTases_sf"/>
</dbReference>
<dbReference type="NCBIfam" id="TIGR00138">
    <property type="entry name" value="rsmG_gidB"/>
    <property type="match status" value="1"/>
</dbReference>
<dbReference type="PANTHER" id="PTHR31760">
    <property type="entry name" value="S-ADENOSYL-L-METHIONINE-DEPENDENT METHYLTRANSFERASES SUPERFAMILY PROTEIN"/>
    <property type="match status" value="1"/>
</dbReference>
<dbReference type="PANTHER" id="PTHR31760:SF0">
    <property type="entry name" value="S-ADENOSYL-L-METHIONINE-DEPENDENT METHYLTRANSFERASES SUPERFAMILY PROTEIN"/>
    <property type="match status" value="1"/>
</dbReference>
<dbReference type="Pfam" id="PF02527">
    <property type="entry name" value="GidB"/>
    <property type="match status" value="1"/>
</dbReference>
<dbReference type="PIRSF" id="PIRSF003078">
    <property type="entry name" value="GidB"/>
    <property type="match status" value="1"/>
</dbReference>
<dbReference type="SUPFAM" id="SSF53335">
    <property type="entry name" value="S-adenosyl-L-methionine-dependent methyltransferases"/>
    <property type="match status" value="1"/>
</dbReference>
<sequence>MSVLAETIKEGAREMGIVITEKQVRQFEEYYSLIIERNKSLNLTAITGEREVAVKHFLDSLTCLKAVPLEDGTSLMDVGTGAGFPGIPLKICRPSVRVKLVESAEKKAVFLREAIGRLGLEMAEAIWARAEDVGKDPDHREKYGCVVARAVAELAVLAEYCLPAAGVGGCFLAMKGPKAEEEAVRAKDAIKILGGRLEEIINLKLPFTGDRRSLVVIRKIGETPEKYPRRPGVPQKRPL</sequence>
<name>RSMG_PELTS</name>
<protein>
    <recommendedName>
        <fullName evidence="1">Ribosomal RNA small subunit methyltransferase G</fullName>
        <ecNumber evidence="1">2.1.1.-</ecNumber>
    </recommendedName>
    <alternativeName>
        <fullName evidence="1">16S rRNA 7-methylguanosine methyltransferase</fullName>
        <shortName evidence="1">16S rRNA m7G methyltransferase</shortName>
    </alternativeName>
</protein>
<organism>
    <name type="scientific">Pelotomaculum thermopropionicum (strain DSM 13744 / JCM 10971 / SI)</name>
    <dbReference type="NCBI Taxonomy" id="370438"/>
    <lineage>
        <taxon>Bacteria</taxon>
        <taxon>Bacillati</taxon>
        <taxon>Bacillota</taxon>
        <taxon>Clostridia</taxon>
        <taxon>Eubacteriales</taxon>
        <taxon>Desulfotomaculaceae</taxon>
        <taxon>Pelotomaculum</taxon>
    </lineage>
</organism>
<reference key="1">
    <citation type="journal article" date="2008" name="Genome Res.">
        <title>The genome of Pelotomaculum thermopropionicum reveals niche-associated evolution in anaerobic microbiota.</title>
        <authorList>
            <person name="Kosaka T."/>
            <person name="Kato S."/>
            <person name="Shimoyama T."/>
            <person name="Ishii S."/>
            <person name="Abe T."/>
            <person name="Watanabe K."/>
        </authorList>
    </citation>
    <scope>NUCLEOTIDE SEQUENCE [LARGE SCALE GENOMIC DNA]</scope>
    <source>
        <strain>DSM 13744 / JCM 10971 / SI</strain>
    </source>
</reference>
<keyword id="KW-0963">Cytoplasm</keyword>
<keyword id="KW-0489">Methyltransferase</keyword>
<keyword id="KW-1185">Reference proteome</keyword>
<keyword id="KW-0698">rRNA processing</keyword>
<keyword id="KW-0949">S-adenosyl-L-methionine</keyword>
<keyword id="KW-0808">Transferase</keyword>
<gene>
    <name evidence="1" type="primary">rsmG</name>
    <name type="ordered locus">PTH_2915</name>
</gene>